<comment type="function">
    <text evidence="2 4 6">Kinesin is a microtubule-associated force-producing protein that may play a role in organelle transport (Probable). The light chain may function in coupling of cargo to the heavy chain or in the modulation of its ATPase activity (Probable). Recruits unc-83 (within the unc-83-unc-84 LINC complex) to the nuclear envelope during nuclear migration to mediate the link between the nuclear envelope and the microtubule cytoskeleton in hypodermal precursor cells (PubMed:19605495, PubMed:27697906).</text>
</comment>
<comment type="subunit">
    <text evidence="1 2 3 6">Oligomeric complex composed of two heavy chains and two light chains (Probable). Interacts with unc-83; the interaction is direct (PubMed:19605495). Interacts with unc-33; the interaction regulates unc-33 neurite localization (PubMed:16236031). Interacts with casy-1 (PubMed:25035490).</text>
</comment>
<comment type="interaction">
    <interactant intactId="EBI-315578">
        <id>P46822</id>
    </interactant>
    <interactant intactId="EBI-315684">
        <id>P34609</id>
        <label>unc-16</label>
    </interactant>
    <organismsDiffer>false</organismsDiffer>
    <experiments>4</experiments>
</comment>
<comment type="subcellular location">
    <subcellularLocation>
        <location evidence="6">Cytoplasm</location>
        <location evidence="6">Cytoskeleton</location>
    </subcellularLocation>
    <subcellularLocation>
        <location evidence="2">Cytoplasm</location>
    </subcellularLocation>
    <subcellularLocation>
        <location evidence="2">Nucleus envelope</location>
    </subcellularLocation>
    <text evidence="2">Recruited to the nuclear envelope by unc-83 during nuclear migrations.</text>
</comment>
<comment type="alternative products">
    <event type="alternative splicing"/>
    <isoform>
        <id>P46822-1</id>
        <name evidence="8">b</name>
        <sequence type="displayed"/>
    </isoform>
    <isoform>
        <id>P46822-2</id>
        <name evidence="7">a</name>
        <sequence type="described" ref="VSP_002881 VSP_002882"/>
    </isoform>
    <isoform>
        <id>P46822-3</id>
        <name evidence="9">c</name>
        <sequence type="described" ref="VSP_002882"/>
    </isoform>
</comment>
<comment type="domain">
    <text>The light chain is composed of three structural domains: a large globular N-terminal domain which may be involved in binding to kinesin heavy chains, a central alpha-helical coiled-coil domain that mediates the light chain dimerization; and a small globular C-terminal which may play a role in regulating mechanochemical activity or attachment of kinesin to membrane-bound organelles.</text>
</comment>
<comment type="disruption phenotype">
    <text evidence="4">RNAi-mediated knockdown results in defects in nuclear migration in hyp7 hypodermal precursor cells (PubMed:27697906). RNAi-mediated knockdown in a dhc-1 (js319) mutant background results in defective nuclei migrations in larval hypodermal P-cells (PubMed:27697906).</text>
</comment>
<comment type="similarity">
    <text evidence="6">Belongs to the kinesin light chain family.</text>
</comment>
<proteinExistence type="evidence at protein level"/>
<gene>
    <name evidence="8" type="primary">klc-2</name>
    <name evidence="8" type="ORF">C18C4.10</name>
</gene>
<protein>
    <recommendedName>
        <fullName>Kinesin light chain</fullName>
        <shortName>KLC</shortName>
    </recommendedName>
</protein>
<keyword id="KW-0025">Alternative splicing</keyword>
<keyword id="KW-0106">Calcium</keyword>
<keyword id="KW-0130">Cell adhesion</keyword>
<keyword id="KW-0175">Coiled coil</keyword>
<keyword id="KW-0963">Cytoplasm</keyword>
<keyword id="KW-0206">Cytoskeleton</keyword>
<keyword id="KW-0493">Microtubule</keyword>
<keyword id="KW-0505">Motor protein</keyword>
<keyword id="KW-0539">Nucleus</keyword>
<keyword id="KW-1185">Reference proteome</keyword>
<keyword id="KW-0677">Repeat</keyword>
<keyword id="KW-0802">TPR repeat</keyword>
<keyword id="KW-0813">Transport</keyword>
<feature type="chain" id="PRO_0000215101" description="Kinesin light chain">
    <location>
        <begin position="1"/>
        <end position="540"/>
    </location>
</feature>
<feature type="repeat" description="TPR 1">
    <location>
        <begin position="206"/>
        <end position="239"/>
    </location>
</feature>
<feature type="repeat" description="TPR 2">
    <location>
        <begin position="248"/>
        <end position="281"/>
    </location>
</feature>
<feature type="repeat" description="TPR 3">
    <location>
        <begin position="290"/>
        <end position="323"/>
    </location>
</feature>
<feature type="repeat" description="TPR 4">
    <location>
        <begin position="332"/>
        <end position="365"/>
    </location>
</feature>
<feature type="repeat" description="TPR 5">
    <location>
        <begin position="374"/>
        <end position="407"/>
    </location>
</feature>
<feature type="repeat" description="TPR 6">
    <location>
        <begin position="456"/>
        <end position="489"/>
    </location>
</feature>
<feature type="coiled-coil region">
    <location>
        <begin position="34"/>
        <end position="138"/>
    </location>
</feature>
<feature type="splice variant" id="VSP_002881" description="In isoform a." evidence="5">
    <original>M</original>
    <variation>MNLAGSTIQAYRQRKIESLAKM</variation>
    <location>
        <position position="1"/>
    </location>
</feature>
<feature type="splice variant" id="VSP_002882" description="In isoform a and isoform c." evidence="5">
    <original>HEPLRSGAMGGIDEMSQSMMASTIGGSRNSMTTSTSQTGLKNKLMNALGFNS</original>
    <variation>MSESRRMERSVMY</variation>
    <location>
        <begin position="489"/>
        <end position="540"/>
    </location>
</feature>
<feature type="sequence conflict" description="In Ref. 1; CAA82752/CAA82753." evidence="6" ref="1">
    <original>F</original>
    <variation>L</variation>
    <location>
        <position position="141"/>
    </location>
</feature>
<feature type="sequence conflict" description="In Ref. 1; CAA82753." evidence="6" ref="1">
    <original>K</original>
    <variation>N</variation>
    <location>
        <position position="375"/>
    </location>
</feature>
<name>KLC_CAEEL</name>
<sequence length="540" mass="60225">MSNMSQDDVTTGLRTVQQGLEALREEHSTISNTLETSVKGVKEDEAPLPKQKLSQINDNLDKLVCGVDETSLMLMVFQLTQGMDAQHQKYQAQRRRLCQENAWLRDELSSTQIKLQQSEQMVAQLEEENKHLKYMASIKQFDDGTQSDTKTSVDVGPQPVTNETLQELGFGPEDEEDMNASQFNQPTPANQMAASANVGYEIPARLRTLHNLVIQYASQGRYEVAVPLCKQALEDLEKTSGHDHPDVATMLNILALVYRDQNKYKEAANLLNEALSIREKCLGESHPAVAATLNNLAVLFGKRGKFKDAEPLCKRALEIREKVLGDDHPDVAKQLNNLALLCQNQGKYEEVEKYYKRALEIYESKLGPDDPNVAKTKNNLSSAYLKQGKYKEAEELYKQILTRAHEREFGQISGENKPIWQIAEEREENKHKGEGATANEQAGWAKAAKVDSPTVTTTLKNLGALYRRQGKYEAAETLEDVALRAKKQHEPLRSGAMGGIDEMSQSMMASTIGGSRNSMTTSTSQTGLKNKLMNALGFNS</sequence>
<dbReference type="EMBL" id="Z29644">
    <property type="protein sequence ID" value="CAA82752.1"/>
    <property type="molecule type" value="mRNA"/>
</dbReference>
<dbReference type="EMBL" id="Z29645">
    <property type="protein sequence ID" value="CAA82753.1"/>
    <property type="molecule type" value="mRNA"/>
</dbReference>
<dbReference type="EMBL" id="BX284605">
    <property type="protein sequence ID" value="CCD65110.1"/>
    <property type="molecule type" value="Genomic_DNA"/>
</dbReference>
<dbReference type="EMBL" id="BX284605">
    <property type="protein sequence ID" value="CCD65111.1"/>
    <property type="molecule type" value="Genomic_DNA"/>
</dbReference>
<dbReference type="EMBL" id="BX284605">
    <property type="protein sequence ID" value="CCD65112.1"/>
    <property type="molecule type" value="Genomic_DNA"/>
</dbReference>
<dbReference type="PIR" id="H89052">
    <property type="entry name" value="H89052"/>
</dbReference>
<dbReference type="PIR" id="S41864">
    <property type="entry name" value="S41864"/>
</dbReference>
<dbReference type="PIR" id="S47997">
    <property type="entry name" value="S47997"/>
</dbReference>
<dbReference type="RefSeq" id="NP_001023663.1">
    <molecule id="P46822-2"/>
    <property type="nucleotide sequence ID" value="NM_001028492.5"/>
</dbReference>
<dbReference type="RefSeq" id="NP_001023664.1">
    <molecule id="P46822-1"/>
    <property type="nucleotide sequence ID" value="NM_001028493.7"/>
</dbReference>
<dbReference type="RefSeq" id="NP_001023665.1">
    <molecule id="P46822-3"/>
    <property type="nucleotide sequence ID" value="NM_001028494.5"/>
</dbReference>
<dbReference type="SMR" id="P46822"/>
<dbReference type="BioGRID" id="43991">
    <property type="interactions" value="26"/>
</dbReference>
<dbReference type="ComplexPortal" id="CPX-1390">
    <property type="entry name" value="Kinesin I motor complex, klc-2 variant"/>
</dbReference>
<dbReference type="FunCoup" id="P46822">
    <property type="interactions" value="1303"/>
</dbReference>
<dbReference type="IntAct" id="P46822">
    <property type="interactions" value="14"/>
</dbReference>
<dbReference type="STRING" id="6239.C18C4.10b.1"/>
<dbReference type="iPTMnet" id="P46822"/>
<dbReference type="PaxDb" id="6239-C18C4.10b.1"/>
<dbReference type="PeptideAtlas" id="P46822"/>
<dbReference type="EnsemblMetazoa" id="C18C4.10a.1">
    <molecule id="P46822-2"/>
    <property type="protein sequence ID" value="C18C4.10a.1"/>
    <property type="gene ID" value="WBGene00002215"/>
</dbReference>
<dbReference type="EnsemblMetazoa" id="C18C4.10b.1">
    <molecule id="P46822-1"/>
    <property type="protein sequence ID" value="C18C4.10b.1"/>
    <property type="gene ID" value="WBGene00002215"/>
</dbReference>
<dbReference type="EnsemblMetazoa" id="C18C4.10b.2">
    <molecule id="P46822-1"/>
    <property type="protein sequence ID" value="C18C4.10b.2"/>
    <property type="gene ID" value="WBGene00002215"/>
</dbReference>
<dbReference type="EnsemblMetazoa" id="C18C4.10b.3">
    <molecule id="P46822-1"/>
    <property type="protein sequence ID" value="C18C4.10b.3"/>
    <property type="gene ID" value="WBGene00002215"/>
</dbReference>
<dbReference type="EnsemblMetazoa" id="C18C4.10c.1">
    <molecule id="P46822-3"/>
    <property type="protein sequence ID" value="C18C4.10c.1"/>
    <property type="gene ID" value="WBGene00002215"/>
</dbReference>
<dbReference type="GeneID" id="178942"/>
<dbReference type="KEGG" id="cel:CELE_C18C4.10"/>
<dbReference type="UCSC" id="C18C4.10d.1">
    <molecule id="P46822-1"/>
    <property type="organism name" value="c. elegans"/>
</dbReference>
<dbReference type="AGR" id="WB:WBGene00002215"/>
<dbReference type="CTD" id="178942"/>
<dbReference type="WormBase" id="C18C4.10a">
    <molecule id="P46822-2"/>
    <property type="protein sequence ID" value="CE27362"/>
    <property type="gene ID" value="WBGene00002215"/>
    <property type="gene designation" value="klc-2"/>
</dbReference>
<dbReference type="WormBase" id="C18C4.10b">
    <molecule id="P46822-1"/>
    <property type="protein sequence ID" value="CE32802"/>
    <property type="gene ID" value="WBGene00002215"/>
    <property type="gene designation" value="klc-2"/>
</dbReference>
<dbReference type="WormBase" id="C18C4.10c">
    <molecule id="P46822-3"/>
    <property type="protein sequence ID" value="CE32803"/>
    <property type="gene ID" value="WBGene00002215"/>
    <property type="gene designation" value="klc-2"/>
</dbReference>
<dbReference type="eggNOG" id="KOG1840">
    <property type="taxonomic scope" value="Eukaryota"/>
</dbReference>
<dbReference type="GeneTree" id="ENSGT00940000155555"/>
<dbReference type="InParanoid" id="P46822"/>
<dbReference type="OMA" id="SAGEYPT"/>
<dbReference type="OrthoDB" id="413723at2759"/>
<dbReference type="PhylomeDB" id="P46822"/>
<dbReference type="Reactome" id="R-CEL-6811434">
    <property type="pathway name" value="COPI-dependent Golgi-to-ER retrograde traffic"/>
</dbReference>
<dbReference type="Reactome" id="R-CEL-983189">
    <property type="pathway name" value="Kinesins"/>
</dbReference>
<dbReference type="PRO" id="PR:P46822"/>
<dbReference type="Proteomes" id="UP000001940">
    <property type="component" value="Chromosome V"/>
</dbReference>
<dbReference type="Bgee" id="WBGene00002215">
    <property type="expression patterns" value="Expressed in pharyngeal muscle cell (C elegans) and 4 other cell types or tissues"/>
</dbReference>
<dbReference type="GO" id="GO:0005737">
    <property type="term" value="C:cytoplasm"/>
    <property type="evidence" value="ECO:0000314"/>
    <property type="project" value="WormBase"/>
</dbReference>
<dbReference type="GO" id="GO:0016938">
    <property type="term" value="C:kinesin I complex"/>
    <property type="evidence" value="ECO:0000353"/>
    <property type="project" value="WormBase"/>
</dbReference>
<dbReference type="GO" id="GO:0005874">
    <property type="term" value="C:microtubule"/>
    <property type="evidence" value="ECO:0007669"/>
    <property type="project" value="UniProtKB-KW"/>
</dbReference>
<dbReference type="GO" id="GO:0005635">
    <property type="term" value="C:nuclear envelope"/>
    <property type="evidence" value="ECO:0000314"/>
    <property type="project" value="WormBase"/>
</dbReference>
<dbReference type="GO" id="GO:0019894">
    <property type="term" value="F:kinesin binding"/>
    <property type="evidence" value="ECO:0000353"/>
    <property type="project" value="WormBase"/>
</dbReference>
<dbReference type="GO" id="GO:0048675">
    <property type="term" value="P:axon extension"/>
    <property type="evidence" value="ECO:0000315"/>
    <property type="project" value="WormBase"/>
</dbReference>
<dbReference type="GO" id="GO:0007155">
    <property type="term" value="P:cell adhesion"/>
    <property type="evidence" value="ECO:0007669"/>
    <property type="project" value="UniProtKB-KW"/>
</dbReference>
<dbReference type="GO" id="GO:0051295">
    <property type="term" value="P:establishment of meiotic spindle localization"/>
    <property type="evidence" value="ECO:0000315"/>
    <property type="project" value="WormBase"/>
</dbReference>
<dbReference type="GO" id="GO:0040011">
    <property type="term" value="P:locomotion"/>
    <property type="evidence" value="ECO:0000315"/>
    <property type="project" value="WormBase"/>
</dbReference>
<dbReference type="GO" id="GO:0007018">
    <property type="term" value="P:microtubule-based movement"/>
    <property type="evidence" value="ECO:0000318"/>
    <property type="project" value="GO_Central"/>
</dbReference>
<dbReference type="GO" id="GO:0002119">
    <property type="term" value="P:nematode larval development"/>
    <property type="evidence" value="ECO:0000315"/>
    <property type="project" value="WormBase"/>
</dbReference>
<dbReference type="GO" id="GO:0030473">
    <property type="term" value="P:nuclear migration along microtubule"/>
    <property type="evidence" value="ECO:0000315"/>
    <property type="project" value="UniProtKB"/>
</dbReference>
<dbReference type="GO" id="GO:0040038">
    <property type="term" value="P:polar body extrusion after meiotic divisions"/>
    <property type="evidence" value="ECO:0000315"/>
    <property type="project" value="WormBase"/>
</dbReference>
<dbReference type="GO" id="GO:0008104">
    <property type="term" value="P:protein localization"/>
    <property type="evidence" value="ECO:0000315"/>
    <property type="project" value="ComplexPortal"/>
</dbReference>
<dbReference type="GO" id="GO:0048489">
    <property type="term" value="P:synaptic vesicle transport"/>
    <property type="evidence" value="ECO:0000315"/>
    <property type="project" value="WormBase"/>
</dbReference>
<dbReference type="FunFam" id="1.25.40.10:FF:000003">
    <property type="entry name" value="kinesin light chain isoform X1"/>
    <property type="match status" value="1"/>
</dbReference>
<dbReference type="Gene3D" id="1.25.40.10">
    <property type="entry name" value="Tetratricopeptide repeat domain"/>
    <property type="match status" value="1"/>
</dbReference>
<dbReference type="InterPro" id="IPR002151">
    <property type="entry name" value="Kinesin_light"/>
</dbReference>
<dbReference type="InterPro" id="IPR015792">
    <property type="entry name" value="Kinesin_light_repeat"/>
</dbReference>
<dbReference type="InterPro" id="IPR011990">
    <property type="entry name" value="TPR-like_helical_dom_sf"/>
</dbReference>
<dbReference type="InterPro" id="IPR019734">
    <property type="entry name" value="TPR_rpt"/>
</dbReference>
<dbReference type="PANTHER" id="PTHR45783">
    <property type="entry name" value="KINESIN LIGHT CHAIN"/>
    <property type="match status" value="1"/>
</dbReference>
<dbReference type="PANTHER" id="PTHR45783:SF3">
    <property type="entry name" value="KINESIN LIGHT CHAIN"/>
    <property type="match status" value="1"/>
</dbReference>
<dbReference type="Pfam" id="PF13374">
    <property type="entry name" value="TPR_10"/>
    <property type="match status" value="2"/>
</dbReference>
<dbReference type="Pfam" id="PF13424">
    <property type="entry name" value="TPR_12"/>
    <property type="match status" value="2"/>
</dbReference>
<dbReference type="PRINTS" id="PR00381">
    <property type="entry name" value="KINESINLIGHT"/>
</dbReference>
<dbReference type="SMART" id="SM00028">
    <property type="entry name" value="TPR"/>
    <property type="match status" value="5"/>
</dbReference>
<dbReference type="SUPFAM" id="SSF48452">
    <property type="entry name" value="TPR-like"/>
    <property type="match status" value="1"/>
</dbReference>
<dbReference type="PROSITE" id="PS01160">
    <property type="entry name" value="KINESIN_LIGHT"/>
    <property type="match status" value="4"/>
</dbReference>
<dbReference type="PROSITE" id="PS50005">
    <property type="entry name" value="TPR"/>
    <property type="match status" value="6"/>
</dbReference>
<dbReference type="PROSITE" id="PS50293">
    <property type="entry name" value="TPR_REGION"/>
    <property type="match status" value="2"/>
</dbReference>
<organism>
    <name type="scientific">Caenorhabditis elegans</name>
    <dbReference type="NCBI Taxonomy" id="6239"/>
    <lineage>
        <taxon>Eukaryota</taxon>
        <taxon>Metazoa</taxon>
        <taxon>Ecdysozoa</taxon>
        <taxon>Nematoda</taxon>
        <taxon>Chromadorea</taxon>
        <taxon>Rhabditida</taxon>
        <taxon>Rhabditina</taxon>
        <taxon>Rhabditomorpha</taxon>
        <taxon>Rhabditoidea</taxon>
        <taxon>Rhabditidae</taxon>
        <taxon>Peloderinae</taxon>
        <taxon>Caenorhabditis</taxon>
    </lineage>
</organism>
<accession>P46822</accession>
<accession>Q18088</accession>
<accession>Q6BEW4</accession>
<accession>Q8I7M2</accession>
<accession>Q8TA80</accession>
<accession>Q95QV1</accession>
<evidence type="ECO:0000269" key="1">
    <source>
    </source>
</evidence>
<evidence type="ECO:0000269" key="2">
    <source>
    </source>
</evidence>
<evidence type="ECO:0000269" key="3">
    <source>
    </source>
</evidence>
<evidence type="ECO:0000269" key="4">
    <source>
    </source>
</evidence>
<evidence type="ECO:0000303" key="5">
    <source>
    </source>
</evidence>
<evidence type="ECO:0000305" key="6"/>
<evidence type="ECO:0000312" key="7">
    <source>
        <dbReference type="WormBase" id="C18C4.10a"/>
    </source>
</evidence>
<evidence type="ECO:0000312" key="8">
    <source>
        <dbReference type="WormBase" id="C18C4.10b"/>
    </source>
</evidence>
<evidence type="ECO:0000312" key="9">
    <source>
        <dbReference type="WormBase" id="C18C4.10c"/>
    </source>
</evidence>
<reference key="1">
    <citation type="journal article" date="1994" name="J. Mol. Biol.">
        <title>Kinesin light chain isoforms in Caenorhabditis elegans.</title>
        <authorList>
            <person name="Fan J."/>
            <person name="Amos L.A."/>
        </authorList>
    </citation>
    <scope>NUCLEOTIDE SEQUENCE [MRNA] (ISOFORMS A AND B)</scope>
</reference>
<reference key="2">
    <citation type="journal article" date="1998" name="Science">
        <title>Genome sequence of the nematode C. elegans: a platform for investigating biology.</title>
        <authorList>
            <consortium name="The C. elegans sequencing consortium"/>
        </authorList>
    </citation>
    <scope>NUCLEOTIDE SEQUENCE [LARGE SCALE GENOMIC DNA]</scope>
    <source>
        <strain>Bristol N2</strain>
    </source>
</reference>
<reference key="3">
    <citation type="journal article" date="2005" name="J. Neurochem.">
        <title>Regulatory machinery of UNC-33 Ce-CRMP localization in neurites during neuronal development in Caenorhabditis elegans.</title>
        <authorList>
            <person name="Tsuboi D."/>
            <person name="Hikita T."/>
            <person name="Qadota H."/>
            <person name="Amano M."/>
            <person name="Kaibuchi K."/>
        </authorList>
    </citation>
    <scope>INTERACTION WITH UNC-33</scope>
</reference>
<reference key="4">
    <citation type="journal article" date="2009" name="Development">
        <title>UNC-83 is a nuclear-specific cargo adaptor for kinesin-1-mediated nuclear migration.</title>
        <authorList>
            <person name="Meyerzon M."/>
            <person name="Fridolfsson H.N."/>
            <person name="Ly N."/>
            <person name="McNally F.J."/>
            <person name="Starr D.A."/>
        </authorList>
    </citation>
    <scope>FUNCTION</scope>
    <scope>INTERACTION WITH UNC-83</scope>
    <scope>SUBCELLULAR LOCATION</scope>
    <scope>DISRUPTION PHENOTYPE</scope>
</reference>
<reference key="5">
    <citation type="journal article" date="2016" name="Development">
        <title>Nuclei migrate through constricted spaces using microtubule motors and actin networks in C. elegans hypodermal cells.</title>
        <authorList>
            <person name="Bone C.R."/>
            <person name="Chang Y.T."/>
            <person name="Cain N.E."/>
            <person name="Murphy S.P."/>
            <person name="Starr D.A."/>
        </authorList>
    </citation>
    <scope>FUNCTION</scope>
    <scope>DISRUPTION PHENOTYPE</scope>
</reference>
<reference key="6">
    <citation type="journal article" date="2014" name="Science">
        <title>Role of synaptic phosphatidylinositol 3-kinase in a behavioral learning response in C. elegans.</title>
        <authorList>
            <person name="Ohno H."/>
            <person name="Kato S."/>
            <person name="Naito Y."/>
            <person name="Kunitomo H."/>
            <person name="Tomioka M."/>
            <person name="Iino Y."/>
        </authorList>
    </citation>
    <scope>INTERACTION WITH CASY-1</scope>
</reference>